<feature type="chain" id="PRO_0000441205" description="Glutathione S-transferase aclG">
    <location>
        <begin position="1"/>
        <end position="221"/>
    </location>
</feature>
<feature type="domain" description="GST N-terminal" evidence="2">
    <location>
        <begin position="1"/>
        <end position="91"/>
    </location>
</feature>
<feature type="domain" description="GST C-terminal" evidence="3">
    <location>
        <begin position="97"/>
        <end position="221"/>
    </location>
</feature>
<dbReference type="EC" id="2.5.1.18" evidence="1"/>
<dbReference type="EMBL" id="BA000050">
    <property type="protein sequence ID" value="BAE56603.1"/>
    <property type="molecule type" value="Genomic_DNA"/>
</dbReference>
<dbReference type="SMR" id="Q2UPB2"/>
<dbReference type="STRING" id="510516.Q2UPB2"/>
<dbReference type="EnsemblFungi" id="BAE56603">
    <property type="protein sequence ID" value="BAE56603"/>
    <property type="gene ID" value="AO090001000040"/>
</dbReference>
<dbReference type="HOGENOM" id="CLU_011226_14_2_1"/>
<dbReference type="OMA" id="FAMPWMF"/>
<dbReference type="Proteomes" id="UP000006564">
    <property type="component" value="Chromosome 2"/>
</dbReference>
<dbReference type="GO" id="GO:0004364">
    <property type="term" value="F:glutathione transferase activity"/>
    <property type="evidence" value="ECO:0007669"/>
    <property type="project" value="UniProtKB-EC"/>
</dbReference>
<dbReference type="Gene3D" id="1.20.1050.130">
    <property type="match status" value="1"/>
</dbReference>
<dbReference type="InterPro" id="IPR010987">
    <property type="entry name" value="Glutathione-S-Trfase_C-like"/>
</dbReference>
<dbReference type="InterPro" id="IPR036282">
    <property type="entry name" value="Glutathione-S-Trfase_C_sf"/>
</dbReference>
<dbReference type="InterPro" id="IPR040079">
    <property type="entry name" value="Glutathione_S-Trfase"/>
</dbReference>
<dbReference type="InterPro" id="IPR004045">
    <property type="entry name" value="Glutathione_S-Trfase_N"/>
</dbReference>
<dbReference type="InterPro" id="IPR004046">
    <property type="entry name" value="GST_C"/>
</dbReference>
<dbReference type="InterPro" id="IPR036249">
    <property type="entry name" value="Thioredoxin-like_sf"/>
</dbReference>
<dbReference type="PANTHER" id="PTHR44051">
    <property type="entry name" value="GLUTATHIONE S-TRANSFERASE-RELATED"/>
    <property type="match status" value="1"/>
</dbReference>
<dbReference type="PANTHER" id="PTHR44051:SF20">
    <property type="entry name" value="GLUTATHIONE TRANSFERASE 1 (EUROFUNG)"/>
    <property type="match status" value="1"/>
</dbReference>
<dbReference type="Pfam" id="PF00043">
    <property type="entry name" value="GST_C"/>
    <property type="match status" value="1"/>
</dbReference>
<dbReference type="SFLD" id="SFLDS00019">
    <property type="entry name" value="Glutathione_Transferase_(cytos"/>
    <property type="match status" value="1"/>
</dbReference>
<dbReference type="SFLD" id="SFLDG00358">
    <property type="entry name" value="Main_(cytGST)"/>
    <property type="match status" value="1"/>
</dbReference>
<dbReference type="SUPFAM" id="SSF47616">
    <property type="entry name" value="GST C-terminal domain-like"/>
    <property type="match status" value="1"/>
</dbReference>
<dbReference type="SUPFAM" id="SSF52833">
    <property type="entry name" value="Thioredoxin-like"/>
    <property type="match status" value="1"/>
</dbReference>
<dbReference type="PROSITE" id="PS50405">
    <property type="entry name" value="GST_CTER"/>
    <property type="match status" value="1"/>
</dbReference>
<dbReference type="PROSITE" id="PS50404">
    <property type="entry name" value="GST_NTER"/>
    <property type="match status" value="1"/>
</dbReference>
<reference key="1">
    <citation type="journal article" date="2005" name="Nature">
        <title>Genome sequencing and analysis of Aspergillus oryzae.</title>
        <authorList>
            <person name="Machida M."/>
            <person name="Asai K."/>
            <person name="Sano M."/>
            <person name="Tanaka T."/>
            <person name="Kumagai T."/>
            <person name="Terai G."/>
            <person name="Kusumoto K."/>
            <person name="Arima T."/>
            <person name="Akita O."/>
            <person name="Kashiwagi Y."/>
            <person name="Abe K."/>
            <person name="Gomi K."/>
            <person name="Horiuchi H."/>
            <person name="Kitamoto K."/>
            <person name="Kobayashi T."/>
            <person name="Takeuchi M."/>
            <person name="Denning D.W."/>
            <person name="Galagan J.E."/>
            <person name="Nierman W.C."/>
            <person name="Yu J."/>
            <person name="Archer D.B."/>
            <person name="Bennett J.W."/>
            <person name="Bhatnagar D."/>
            <person name="Cleveland T.E."/>
            <person name="Fedorova N.D."/>
            <person name="Gotoh O."/>
            <person name="Horikawa H."/>
            <person name="Hosoyama A."/>
            <person name="Ichinomiya M."/>
            <person name="Igarashi R."/>
            <person name="Iwashita K."/>
            <person name="Juvvadi P.R."/>
            <person name="Kato M."/>
            <person name="Kato Y."/>
            <person name="Kin T."/>
            <person name="Kokubun A."/>
            <person name="Maeda H."/>
            <person name="Maeyama N."/>
            <person name="Maruyama J."/>
            <person name="Nagasaki H."/>
            <person name="Nakajima T."/>
            <person name="Oda K."/>
            <person name="Okada K."/>
            <person name="Paulsen I."/>
            <person name="Sakamoto K."/>
            <person name="Sawano T."/>
            <person name="Takahashi M."/>
            <person name="Takase K."/>
            <person name="Terabayashi Y."/>
            <person name="Wortman J.R."/>
            <person name="Yamada O."/>
            <person name="Yamagata Y."/>
            <person name="Anazawa H."/>
            <person name="Hata Y."/>
            <person name="Koide Y."/>
            <person name="Komori T."/>
            <person name="Koyama Y."/>
            <person name="Minetoki T."/>
            <person name="Suharnan S."/>
            <person name="Tanaka A."/>
            <person name="Isono K."/>
            <person name="Kuhara S."/>
            <person name="Ogasawara N."/>
            <person name="Kikuchi H."/>
        </authorList>
    </citation>
    <scope>NUCLEOTIDE SEQUENCE [LARGE SCALE GENOMIC DNA]</scope>
    <source>
        <strain>ATCC 42149 / RIB 40</strain>
    </source>
</reference>
<reference key="2">
    <citation type="journal article" date="2014" name="Angew. Chem. Int. Ed.">
        <title>Biosynthesis of the halogenated mycotoxin aspirochlorine in koji mold involves a cryptic amino acid conversion.</title>
        <authorList>
            <person name="Chankhamjon P."/>
            <person name="Boettger-Schmidt D."/>
            <person name="Scherlach K."/>
            <person name="Urbansky B."/>
            <person name="Lackner G."/>
            <person name="Kalb D."/>
            <person name="Dahse H.M."/>
            <person name="Hoffmeister D."/>
            <person name="Hertweck C."/>
        </authorList>
    </citation>
    <scope>FUNCTION</scope>
    <scope>PATHWAY</scope>
</reference>
<comment type="function">
    <text evidence="4">Glutathione S-transferase; part of the gene cluster that mediates the biosynthesis of aspirochlorine (or antibiotic A30641), an unusual halogenated spiro compound with distinctive antifungal properties due to selective inhibition of protein biosynthesis, and which is also active against bacteria, viruses, and murine tumor cells (PubMed:25302411). The non-ribosomal peptide synthetase (NRPS) aclP is responsible the formation of the diketopiperazine (DKP) core from the condensation of 2 phenylalanine residues (PubMed:25302411). One Phe residue is tailored into chlorotyrosine by hydroxylation and chlorination, whereas the second Phe undergoes an unprecedented C-C bond cleavage to be converted into glycine (PubMed:25302411). After formation of the DKP, sulfur is incorporated into the DKP by conjugation with glutathione by aclG, followed by its stepwise degradation to the thiol by aclI, aclJ and aclK, and the dithiol oxidation by aclT (PubMed:25302411). In addition, oxygenases (aclB, aclC, aclL and aclO) and O-methyltransferases (aclM and aclU) act as tailoring enzymes to produce the intermediate dechloroaspirochlorine (PubMed:25302411). Ultimately, chlorination of dechloroaspirochlorine by the halogenase aclH is the last step in the aspirochlorine pathway (PubMed:25302411).</text>
</comment>
<comment type="catalytic activity">
    <reaction evidence="1">
        <text>RX + glutathione = an S-substituted glutathione + a halide anion + H(+)</text>
        <dbReference type="Rhea" id="RHEA:16437"/>
        <dbReference type="ChEBI" id="CHEBI:15378"/>
        <dbReference type="ChEBI" id="CHEBI:16042"/>
        <dbReference type="ChEBI" id="CHEBI:17792"/>
        <dbReference type="ChEBI" id="CHEBI:57925"/>
        <dbReference type="ChEBI" id="CHEBI:90779"/>
        <dbReference type="EC" id="2.5.1.18"/>
    </reaction>
</comment>
<comment type="pathway">
    <text evidence="7">Mycotoxin biosynthesis.</text>
</comment>
<comment type="similarity">
    <text evidence="6">Belongs to the GST superfamily.</text>
</comment>
<proteinExistence type="inferred from homology"/>
<gene>
    <name evidence="5" type="primary">aclG</name>
    <name type="ORF">AO090001000040</name>
</gene>
<name>ACLG_ASPOR</name>
<accession>Q2UPB2</accession>
<protein>
    <recommendedName>
        <fullName evidence="5">Glutathione S-transferase aclG</fullName>
        <ecNumber evidence="1">2.5.1.18</ecNumber>
    </recommendedName>
    <alternativeName>
        <fullName evidence="5">Aspirochlorine biosynthesis protein G</fullName>
    </alternativeName>
</protein>
<keyword id="KW-1185">Reference proteome</keyword>
<keyword id="KW-0808">Transferase</keyword>
<organism>
    <name type="scientific">Aspergillus oryzae (strain ATCC 42149 / RIB 40)</name>
    <name type="common">Yellow koji mold</name>
    <dbReference type="NCBI Taxonomy" id="510516"/>
    <lineage>
        <taxon>Eukaryota</taxon>
        <taxon>Fungi</taxon>
        <taxon>Dikarya</taxon>
        <taxon>Ascomycota</taxon>
        <taxon>Pezizomycotina</taxon>
        <taxon>Eurotiomycetes</taxon>
        <taxon>Eurotiomycetidae</taxon>
        <taxon>Eurotiales</taxon>
        <taxon>Aspergillaceae</taxon>
        <taxon>Aspergillus</taxon>
        <taxon>Aspergillus subgen. Circumdati</taxon>
    </lineage>
</organism>
<sequence>MEYDGRVILYIIKADETSYINYIKPLILAEEIQFPHVLSVIDTRDEWFYSIHPERMVPSLKDQDPVTGEKVIVFESTACLQYLVDRFDTDGTWSGRTVAEKGAVLSWTAYQTAALGPTAKYWLYFKRGYPTRANPVQLPRTIEKQWDILEKRLKEPGQQYIALKDRPTLADLSYFPFAMPWMFTFLGVDIKDWPHIQRWSERMLSRPAVARVLQRAPTLGH</sequence>
<evidence type="ECO:0000250" key="1">
    <source>
        <dbReference type="UniProtKB" id="A4GYZ0"/>
    </source>
</evidence>
<evidence type="ECO:0000255" key="2">
    <source>
        <dbReference type="PROSITE-ProRule" id="PRU00684"/>
    </source>
</evidence>
<evidence type="ECO:0000255" key="3">
    <source>
        <dbReference type="PROSITE-ProRule" id="PRU00685"/>
    </source>
</evidence>
<evidence type="ECO:0000269" key="4">
    <source>
    </source>
</evidence>
<evidence type="ECO:0000303" key="5">
    <source>
    </source>
</evidence>
<evidence type="ECO:0000305" key="6"/>
<evidence type="ECO:0000305" key="7">
    <source>
    </source>
</evidence>